<keyword id="KW-0150">Chloroplast</keyword>
<keyword id="KW-0472">Membrane</keyword>
<keyword id="KW-0602">Photosynthesis</keyword>
<keyword id="KW-0604">Photosystem II</keyword>
<keyword id="KW-0934">Plastid</keyword>
<keyword id="KW-0674">Reaction center</keyword>
<keyword id="KW-0793">Thylakoid</keyword>
<keyword id="KW-0812">Transmembrane</keyword>
<keyword id="KW-1133">Transmembrane helix</keyword>
<reference key="1">
    <citation type="journal article" date="2007" name="Mol. Biol. Evol.">
        <title>Plastid genome sequence of the cryptophyte alga Rhodomonas salina CCMP1319: lateral transfer of putative DNA replication machinery and a test of chromist plastid phylogeny.</title>
        <authorList>
            <person name="Khan H."/>
            <person name="Parks N."/>
            <person name="Kozera C."/>
            <person name="Curtis B.A."/>
            <person name="Parsons B.J."/>
            <person name="Bowman S."/>
            <person name="Archibald J.M."/>
        </authorList>
    </citation>
    <scope>NUCLEOTIDE SEQUENCE [LARGE SCALE GENOMIC DNA]</scope>
    <source>
        <strain>CCMP1319 / NEPCC76 / CS-174</strain>
    </source>
</reference>
<comment type="function">
    <text evidence="1">One of the components of the core complex of photosystem II (PSII). PSII is a light-driven water:plastoquinone oxidoreductase that uses light energy to abstract electrons from H(2)O, generating O(2) and a proton gradient subsequently used for ATP formation. It consists of a core antenna complex that captures photons, and an electron transfer chain that converts photonic excitation into a charge separation.</text>
</comment>
<comment type="subunit">
    <text evidence="1">PSII is composed of 1 copy each of membrane proteins PsbA, PsbB, PsbC, PsbD, PsbE, PsbF, PsbH, PsbI, PsbJ, PsbK, PsbL, PsbM, PsbT, PsbX, PsbY, PsbZ, Psb30/Ycf12, at least 3 peripheral proteins of the oxygen-evolving complex and a large number of cofactors. It forms dimeric complexes.</text>
</comment>
<comment type="subcellular location">
    <subcellularLocation>
        <location evidence="1">Plastid</location>
        <location evidence="1">Chloroplast thylakoid membrane</location>
        <topology evidence="1">Single-pass membrane protein</topology>
    </subcellularLocation>
</comment>
<comment type="similarity">
    <text evidence="1">Belongs to the PsbJ family.</text>
</comment>
<proteinExistence type="inferred from homology"/>
<name>PSBJ_RHDSA</name>
<accession>A6MVV2</accession>
<dbReference type="EMBL" id="EF508371">
    <property type="protein sequence ID" value="ABO70830.1"/>
    <property type="molecule type" value="Genomic_DNA"/>
</dbReference>
<dbReference type="RefSeq" id="YP_001293531.1">
    <property type="nucleotide sequence ID" value="NC_009573.1"/>
</dbReference>
<dbReference type="SMR" id="A6MVV2"/>
<dbReference type="GeneID" id="5228641"/>
<dbReference type="GO" id="GO:0009535">
    <property type="term" value="C:chloroplast thylakoid membrane"/>
    <property type="evidence" value="ECO:0007669"/>
    <property type="project" value="UniProtKB-SubCell"/>
</dbReference>
<dbReference type="GO" id="GO:0009539">
    <property type="term" value="C:photosystem II reaction center"/>
    <property type="evidence" value="ECO:0007669"/>
    <property type="project" value="InterPro"/>
</dbReference>
<dbReference type="GO" id="GO:0015979">
    <property type="term" value="P:photosynthesis"/>
    <property type="evidence" value="ECO:0007669"/>
    <property type="project" value="UniProtKB-UniRule"/>
</dbReference>
<dbReference type="Gene3D" id="6.10.250.2070">
    <property type="match status" value="1"/>
</dbReference>
<dbReference type="HAMAP" id="MF_01305">
    <property type="entry name" value="PSII_PsbJ"/>
    <property type="match status" value="1"/>
</dbReference>
<dbReference type="InterPro" id="IPR002682">
    <property type="entry name" value="PSII_PsbJ"/>
</dbReference>
<dbReference type="InterPro" id="IPR037267">
    <property type="entry name" value="PSII_PsbJ_sf"/>
</dbReference>
<dbReference type="NCBIfam" id="NF002722">
    <property type="entry name" value="PRK02565.1"/>
    <property type="match status" value="1"/>
</dbReference>
<dbReference type="PANTHER" id="PTHR34812">
    <property type="entry name" value="PHOTOSYSTEM II REACTION CENTER PROTEIN J"/>
    <property type="match status" value="1"/>
</dbReference>
<dbReference type="PANTHER" id="PTHR34812:SF3">
    <property type="entry name" value="PHOTOSYSTEM II REACTION CENTER PROTEIN J"/>
    <property type="match status" value="1"/>
</dbReference>
<dbReference type="Pfam" id="PF01788">
    <property type="entry name" value="PsbJ"/>
    <property type="match status" value="1"/>
</dbReference>
<dbReference type="SUPFAM" id="SSF161021">
    <property type="entry name" value="Photosystem II reaction center protein J, PsbJ"/>
    <property type="match status" value="1"/>
</dbReference>
<gene>
    <name evidence="1" type="primary">psbJ</name>
</gene>
<evidence type="ECO:0000255" key="1">
    <source>
        <dbReference type="HAMAP-Rule" id="MF_01305"/>
    </source>
</evidence>
<organism>
    <name type="scientific">Rhodomonas salina</name>
    <name type="common">Cryptomonas salina</name>
    <dbReference type="NCBI Taxonomy" id="52970"/>
    <lineage>
        <taxon>Eukaryota</taxon>
        <taxon>Cryptophyceae</taxon>
        <taxon>Pyrenomonadales</taxon>
        <taxon>Pyrenomonadaceae</taxon>
        <taxon>Rhodomonas</taxon>
    </lineage>
</organism>
<protein>
    <recommendedName>
        <fullName evidence="1">Photosystem II reaction center protein J</fullName>
        <shortName evidence="1">PSII-J</shortName>
    </recommendedName>
</protein>
<geneLocation type="chloroplast"/>
<sequence length="39" mass="3922">MASTGRIPLWLIATVGGTAALTVVGLFFYGSYSGVGSSL</sequence>
<feature type="chain" id="PRO_0000322064" description="Photosystem II reaction center protein J">
    <location>
        <begin position="1"/>
        <end position="39"/>
    </location>
</feature>
<feature type="transmembrane region" description="Helical" evidence="1">
    <location>
        <begin position="7"/>
        <end position="27"/>
    </location>
</feature>